<protein>
    <recommendedName>
        <fullName>Kinesin-like protein 8</fullName>
    </recommendedName>
</protein>
<feature type="chain" id="PRO_0000125390" description="Kinesin-like protein 8">
    <location>
        <begin position="1"/>
        <end position="511"/>
    </location>
</feature>
<feature type="domain" description="Kinesin motor" evidence="2">
    <location>
        <begin position="5"/>
        <end position="356"/>
    </location>
</feature>
<feature type="coiled-coil region" evidence="1">
    <location>
        <begin position="373"/>
        <end position="489"/>
    </location>
</feature>
<feature type="binding site" evidence="2">
    <location>
        <begin position="107"/>
        <end position="114"/>
    </location>
    <ligand>
        <name>ATP</name>
        <dbReference type="ChEBI" id="CHEBI:30616"/>
    </ligand>
</feature>
<feature type="modified residue" description="Phosphoserine" evidence="3">
    <location>
        <position position="278"/>
    </location>
</feature>
<feature type="modified residue" description="Phosphoserine" evidence="3">
    <location>
        <position position="279"/>
    </location>
</feature>
<feature type="modified residue" description="Phosphoserine" evidence="3">
    <location>
        <position position="284"/>
    </location>
</feature>
<feature type="modified residue" description="Phosphoserine" evidence="3">
    <location>
        <position position="456"/>
    </location>
</feature>
<accession>Q9UTL2</accession>
<reference key="1">
    <citation type="journal article" date="2002" name="Nature">
        <title>The genome sequence of Schizosaccharomyces pombe.</title>
        <authorList>
            <person name="Wood V."/>
            <person name="Gwilliam R."/>
            <person name="Rajandream M.A."/>
            <person name="Lyne M.H."/>
            <person name="Lyne R."/>
            <person name="Stewart A."/>
            <person name="Sgouros J.G."/>
            <person name="Peat N."/>
            <person name="Hayles J."/>
            <person name="Baker S.G."/>
            <person name="Basham D."/>
            <person name="Bowman S."/>
            <person name="Brooks K."/>
            <person name="Brown D."/>
            <person name="Brown S."/>
            <person name="Chillingworth T."/>
            <person name="Churcher C.M."/>
            <person name="Collins M."/>
            <person name="Connor R."/>
            <person name="Cronin A."/>
            <person name="Davis P."/>
            <person name="Feltwell T."/>
            <person name="Fraser A."/>
            <person name="Gentles S."/>
            <person name="Goble A."/>
            <person name="Hamlin N."/>
            <person name="Harris D.E."/>
            <person name="Hidalgo J."/>
            <person name="Hodgson G."/>
            <person name="Holroyd S."/>
            <person name="Hornsby T."/>
            <person name="Howarth S."/>
            <person name="Huckle E.J."/>
            <person name="Hunt S."/>
            <person name="Jagels K."/>
            <person name="James K.D."/>
            <person name="Jones L."/>
            <person name="Jones M."/>
            <person name="Leather S."/>
            <person name="McDonald S."/>
            <person name="McLean J."/>
            <person name="Mooney P."/>
            <person name="Moule S."/>
            <person name="Mungall K.L."/>
            <person name="Murphy L.D."/>
            <person name="Niblett D."/>
            <person name="Odell C."/>
            <person name="Oliver K."/>
            <person name="O'Neil S."/>
            <person name="Pearson D."/>
            <person name="Quail M.A."/>
            <person name="Rabbinowitsch E."/>
            <person name="Rutherford K.M."/>
            <person name="Rutter S."/>
            <person name="Saunders D."/>
            <person name="Seeger K."/>
            <person name="Sharp S."/>
            <person name="Skelton J."/>
            <person name="Simmonds M.N."/>
            <person name="Squares R."/>
            <person name="Squares S."/>
            <person name="Stevens K."/>
            <person name="Taylor K."/>
            <person name="Taylor R.G."/>
            <person name="Tivey A."/>
            <person name="Walsh S.V."/>
            <person name="Warren T."/>
            <person name="Whitehead S."/>
            <person name="Woodward J.R."/>
            <person name="Volckaert G."/>
            <person name="Aert R."/>
            <person name="Robben J."/>
            <person name="Grymonprez B."/>
            <person name="Weltjens I."/>
            <person name="Vanstreels E."/>
            <person name="Rieger M."/>
            <person name="Schaefer M."/>
            <person name="Mueller-Auer S."/>
            <person name="Gabel C."/>
            <person name="Fuchs M."/>
            <person name="Duesterhoeft A."/>
            <person name="Fritzc C."/>
            <person name="Holzer E."/>
            <person name="Moestl D."/>
            <person name="Hilbert H."/>
            <person name="Borzym K."/>
            <person name="Langer I."/>
            <person name="Beck A."/>
            <person name="Lehrach H."/>
            <person name="Reinhardt R."/>
            <person name="Pohl T.M."/>
            <person name="Eger P."/>
            <person name="Zimmermann W."/>
            <person name="Wedler H."/>
            <person name="Wambutt R."/>
            <person name="Purnelle B."/>
            <person name="Goffeau A."/>
            <person name="Cadieu E."/>
            <person name="Dreano S."/>
            <person name="Gloux S."/>
            <person name="Lelaure V."/>
            <person name="Mottier S."/>
            <person name="Galibert F."/>
            <person name="Aves S.J."/>
            <person name="Xiang Z."/>
            <person name="Hunt C."/>
            <person name="Moore K."/>
            <person name="Hurst S.M."/>
            <person name="Lucas M."/>
            <person name="Rochet M."/>
            <person name="Gaillardin C."/>
            <person name="Tallada V.A."/>
            <person name="Garzon A."/>
            <person name="Thode G."/>
            <person name="Daga R.R."/>
            <person name="Cruzado L."/>
            <person name="Jimenez J."/>
            <person name="Sanchez M."/>
            <person name="del Rey F."/>
            <person name="Benito J."/>
            <person name="Dominguez A."/>
            <person name="Revuelta J.L."/>
            <person name="Moreno S."/>
            <person name="Armstrong J."/>
            <person name="Forsburg S.L."/>
            <person name="Cerutti L."/>
            <person name="Lowe T."/>
            <person name="McCombie W.R."/>
            <person name="Paulsen I."/>
            <person name="Potashkin J."/>
            <person name="Shpakovski G.V."/>
            <person name="Ussery D."/>
            <person name="Barrell B.G."/>
            <person name="Nurse P."/>
        </authorList>
    </citation>
    <scope>NUCLEOTIDE SEQUENCE [LARGE SCALE GENOMIC DNA]</scope>
    <source>
        <strain>972 / ATCC 24843</strain>
    </source>
</reference>
<reference key="2">
    <citation type="journal article" date="2008" name="J. Proteome Res.">
        <title>Phosphoproteome analysis of fission yeast.</title>
        <authorList>
            <person name="Wilson-Grady J.T."/>
            <person name="Villen J."/>
            <person name="Gygi S.P."/>
        </authorList>
    </citation>
    <scope>PHOSPHORYLATION [LARGE SCALE ANALYSIS] AT SER-278; SER-279; SER-284 AND SER-456</scope>
    <scope>IDENTIFICATION BY MASS SPECTROMETRY</scope>
</reference>
<sequence length="511" mass="57254">MSTANVRVIVRVRPKSLRELSKSAEDLLSVDSHNKTVTITPPKHGLKHSRHKNRVNGPRTFAFDECFAPSAPESKNLSGQEDVYESTGPLLVKSILEGFNSCFITYGQKGTGKTYSVVGLRGQPGIIPHISESIFEEIDKLKKKSPNTTITVSISLAEIIEETPYDLLQPNVNSSHTPGETVFVQKDSLTGYHLHGLSEFEVGSAQEIDAFLRLAAKNIRTELSDISGVRKGHSVFSLVVQQRIIDPKTRHSLKKASRLQIIDLASFSKGSQRNESISSFESSSNNKSLSVLNRVIAALTSKKNDVLIPYKDSVLTTLLQDALGGNCRTIMLTCVSPCDFDDTFSALRYSEAARRIKNISNINCKEAYSTNNEGELDDILTTLESDREQLRRHEEHSQKLLKFIEEIRNDYEERIHALESQNSALKAHLRLAVDAYLNPLEFNFDDKNVKLKEFGSPNIAYKQELNSFQGELSSLFKDLKLVKSQLHDYPKPEVSDIDMDMESLRHDSLLD</sequence>
<evidence type="ECO:0000255" key="1"/>
<evidence type="ECO:0000255" key="2">
    <source>
        <dbReference type="PROSITE-ProRule" id="PRU00283"/>
    </source>
</evidence>
<evidence type="ECO:0000269" key="3">
    <source>
    </source>
</evidence>
<evidence type="ECO:0000305" key="4"/>
<keyword id="KW-0067">ATP-binding</keyword>
<keyword id="KW-0175">Coiled coil</keyword>
<keyword id="KW-0963">Cytoplasm</keyword>
<keyword id="KW-0206">Cytoskeleton</keyword>
<keyword id="KW-0493">Microtubule</keyword>
<keyword id="KW-0505">Motor protein</keyword>
<keyword id="KW-0547">Nucleotide-binding</keyword>
<keyword id="KW-0597">Phosphoprotein</keyword>
<keyword id="KW-1185">Reference proteome</keyword>
<name>KLP8_SCHPO</name>
<gene>
    <name type="primary">klp8</name>
    <name type="ORF">SPAC144.14</name>
</gene>
<dbReference type="EMBL" id="CU329670">
    <property type="protein sequence ID" value="CAB59694.1"/>
    <property type="molecule type" value="Genomic_DNA"/>
</dbReference>
<dbReference type="PIR" id="T37681">
    <property type="entry name" value="T37681"/>
</dbReference>
<dbReference type="RefSeq" id="NP_594675.1">
    <property type="nucleotide sequence ID" value="NM_001020104.2"/>
</dbReference>
<dbReference type="SMR" id="Q9UTL2"/>
<dbReference type="BioGRID" id="279295">
    <property type="interactions" value="7"/>
</dbReference>
<dbReference type="DIP" id="DIP-59763N"/>
<dbReference type="FunCoup" id="Q9UTL2">
    <property type="interactions" value="3"/>
</dbReference>
<dbReference type="IntAct" id="Q9UTL2">
    <property type="interactions" value="1"/>
</dbReference>
<dbReference type="STRING" id="284812.Q9UTL2"/>
<dbReference type="iPTMnet" id="Q9UTL2"/>
<dbReference type="SwissPalm" id="Q9UTL2"/>
<dbReference type="PaxDb" id="4896-SPAC144.14.1"/>
<dbReference type="EnsemblFungi" id="SPAC144.14.1">
    <property type="protein sequence ID" value="SPAC144.14.1:pep"/>
    <property type="gene ID" value="SPAC144.14"/>
</dbReference>
<dbReference type="GeneID" id="2542849"/>
<dbReference type="KEGG" id="spo:2542849"/>
<dbReference type="PomBase" id="SPAC144.14">
    <property type="gene designation" value="klp8"/>
</dbReference>
<dbReference type="VEuPathDB" id="FungiDB:SPAC144.14"/>
<dbReference type="eggNOG" id="KOG0241">
    <property type="taxonomic scope" value="Eukaryota"/>
</dbReference>
<dbReference type="HOGENOM" id="CLU_001485_2_3_1"/>
<dbReference type="InParanoid" id="Q9UTL2"/>
<dbReference type="OMA" id="SFWSHNT"/>
<dbReference type="PhylomeDB" id="Q9UTL2"/>
<dbReference type="Reactome" id="R-SPO-9696270">
    <property type="pathway name" value="RND2 GTPase cycle"/>
</dbReference>
<dbReference type="Reactome" id="R-SPO-9696273">
    <property type="pathway name" value="RND1 GTPase cycle"/>
</dbReference>
<dbReference type="PRO" id="PR:Q9UTL2"/>
<dbReference type="Proteomes" id="UP000002485">
    <property type="component" value="Chromosome I"/>
</dbReference>
<dbReference type="GO" id="GO:0032153">
    <property type="term" value="C:cell division site"/>
    <property type="evidence" value="ECO:0007005"/>
    <property type="project" value="PomBase"/>
</dbReference>
<dbReference type="GO" id="GO:0051286">
    <property type="term" value="C:cell tip"/>
    <property type="evidence" value="ECO:0007005"/>
    <property type="project" value="PomBase"/>
</dbReference>
<dbReference type="GO" id="GO:0005737">
    <property type="term" value="C:cytoplasm"/>
    <property type="evidence" value="ECO:0007005"/>
    <property type="project" value="PomBase"/>
</dbReference>
<dbReference type="GO" id="GO:0005871">
    <property type="term" value="C:kinesin complex"/>
    <property type="evidence" value="ECO:0000318"/>
    <property type="project" value="GO_Central"/>
</dbReference>
<dbReference type="GO" id="GO:0071341">
    <property type="term" value="C:medial cortical node"/>
    <property type="evidence" value="ECO:0000314"/>
    <property type="project" value="PomBase"/>
</dbReference>
<dbReference type="GO" id="GO:0005874">
    <property type="term" value="C:microtubule"/>
    <property type="evidence" value="ECO:0000318"/>
    <property type="project" value="GO_Central"/>
</dbReference>
<dbReference type="GO" id="GO:0044732">
    <property type="term" value="C:mitotic spindle pole body"/>
    <property type="evidence" value="ECO:0007005"/>
    <property type="project" value="PomBase"/>
</dbReference>
<dbReference type="GO" id="GO:0005634">
    <property type="term" value="C:nucleus"/>
    <property type="evidence" value="ECO:0007005"/>
    <property type="project" value="PomBase"/>
</dbReference>
<dbReference type="GO" id="GO:0005524">
    <property type="term" value="F:ATP binding"/>
    <property type="evidence" value="ECO:0007669"/>
    <property type="project" value="UniProtKB-KW"/>
</dbReference>
<dbReference type="GO" id="GO:0016887">
    <property type="term" value="F:ATP hydrolysis activity"/>
    <property type="evidence" value="ECO:0000318"/>
    <property type="project" value="GO_Central"/>
</dbReference>
<dbReference type="GO" id="GO:0008017">
    <property type="term" value="F:microtubule binding"/>
    <property type="evidence" value="ECO:0000318"/>
    <property type="project" value="GO_Central"/>
</dbReference>
<dbReference type="GO" id="GO:0003777">
    <property type="term" value="F:microtubule motor activity"/>
    <property type="evidence" value="ECO:0000318"/>
    <property type="project" value="GO_Central"/>
</dbReference>
<dbReference type="GO" id="GO:0007018">
    <property type="term" value="P:microtubule-based movement"/>
    <property type="evidence" value="ECO:0000318"/>
    <property type="project" value="GO_Central"/>
</dbReference>
<dbReference type="CDD" id="cd00106">
    <property type="entry name" value="KISc"/>
    <property type="match status" value="1"/>
</dbReference>
<dbReference type="FunFam" id="3.40.850.10:FF:000200">
    <property type="entry name" value="Kinesin-like protein 8"/>
    <property type="match status" value="1"/>
</dbReference>
<dbReference type="Gene3D" id="3.40.850.10">
    <property type="entry name" value="Kinesin motor domain"/>
    <property type="match status" value="1"/>
</dbReference>
<dbReference type="InterPro" id="IPR027640">
    <property type="entry name" value="Kinesin-like_fam"/>
</dbReference>
<dbReference type="InterPro" id="IPR001752">
    <property type="entry name" value="Kinesin_motor_dom"/>
</dbReference>
<dbReference type="InterPro" id="IPR036961">
    <property type="entry name" value="Kinesin_motor_dom_sf"/>
</dbReference>
<dbReference type="InterPro" id="IPR027417">
    <property type="entry name" value="P-loop_NTPase"/>
</dbReference>
<dbReference type="PANTHER" id="PTHR47969">
    <property type="entry name" value="CHROMOSOME-ASSOCIATED KINESIN KIF4A-RELATED"/>
    <property type="match status" value="1"/>
</dbReference>
<dbReference type="PANTHER" id="PTHR47969:SF15">
    <property type="entry name" value="CHROMOSOME-ASSOCIATED KINESIN KIF4A-RELATED"/>
    <property type="match status" value="1"/>
</dbReference>
<dbReference type="Pfam" id="PF00225">
    <property type="entry name" value="Kinesin"/>
    <property type="match status" value="1"/>
</dbReference>
<dbReference type="PRINTS" id="PR00380">
    <property type="entry name" value="KINESINHEAVY"/>
</dbReference>
<dbReference type="SMART" id="SM00129">
    <property type="entry name" value="KISc"/>
    <property type="match status" value="1"/>
</dbReference>
<dbReference type="SUPFAM" id="SSF52540">
    <property type="entry name" value="P-loop containing nucleoside triphosphate hydrolases"/>
    <property type="match status" value="1"/>
</dbReference>
<dbReference type="PROSITE" id="PS50067">
    <property type="entry name" value="KINESIN_MOTOR_2"/>
    <property type="match status" value="1"/>
</dbReference>
<organism>
    <name type="scientific">Schizosaccharomyces pombe (strain 972 / ATCC 24843)</name>
    <name type="common">Fission yeast</name>
    <dbReference type="NCBI Taxonomy" id="284812"/>
    <lineage>
        <taxon>Eukaryota</taxon>
        <taxon>Fungi</taxon>
        <taxon>Dikarya</taxon>
        <taxon>Ascomycota</taxon>
        <taxon>Taphrinomycotina</taxon>
        <taxon>Schizosaccharomycetes</taxon>
        <taxon>Schizosaccharomycetales</taxon>
        <taxon>Schizosaccharomycetaceae</taxon>
        <taxon>Schizosaccharomyces</taxon>
    </lineage>
</organism>
<proteinExistence type="evidence at protein level"/>
<comment type="subcellular location">
    <subcellularLocation>
        <location evidence="4">Cytoplasm</location>
        <location evidence="4">Cytoskeleton</location>
    </subcellularLocation>
</comment>
<comment type="similarity">
    <text evidence="2">Belongs to the TRAFAC class myosin-kinesin ATPase superfamily. Kinesin family.</text>
</comment>